<name>PDE4A_CAVPO</name>
<reference key="1">
    <citation type="journal article" date="1998" name="Biochem. J.">
        <title>Identification and characterization of the human homologue of the short PDE4A cAMP-specific phosphodiesterase 4A variant RD1 (PDE4A1) by analysis of the human HSPDE4A gene locus located at chromosome 19p13.2.</title>
        <authorList>
            <person name="Sullivan M."/>
            <person name="Rena G."/>
            <person name="Begg F."/>
            <person name="Gordon L."/>
            <person name="Olsen A.S."/>
            <person name="Houslay M.D."/>
        </authorList>
    </citation>
    <scope>NUCLEOTIDE SEQUENCE [MRNA]</scope>
    <source>
        <tissue>Brain</tissue>
    </source>
</reference>
<dbReference type="EC" id="3.1.4.53" evidence="2"/>
<dbReference type="EMBL" id="U97588">
    <property type="protein sequence ID" value="AAC25683.1"/>
    <property type="molecule type" value="mRNA"/>
</dbReference>
<dbReference type="SMR" id="O89085"/>
<dbReference type="STRING" id="10141.ENSCPOP00000014895"/>
<dbReference type="BindingDB" id="O89085"/>
<dbReference type="ChEMBL" id="CHEMBL2366459"/>
<dbReference type="DrugCentral" id="O89085"/>
<dbReference type="eggNOG" id="KOG3689">
    <property type="taxonomic scope" value="Eukaryota"/>
</dbReference>
<dbReference type="InParanoid" id="O89085"/>
<dbReference type="UniPathway" id="UPA00762">
    <property type="reaction ID" value="UER00747"/>
</dbReference>
<dbReference type="Proteomes" id="UP000005447">
    <property type="component" value="Unassembled WGS sequence"/>
</dbReference>
<dbReference type="GO" id="GO:0005829">
    <property type="term" value="C:cytosol"/>
    <property type="evidence" value="ECO:0007669"/>
    <property type="project" value="UniProtKB-SubCell"/>
</dbReference>
<dbReference type="GO" id="GO:0016020">
    <property type="term" value="C:membrane"/>
    <property type="evidence" value="ECO:0007669"/>
    <property type="project" value="UniProtKB-SubCell"/>
</dbReference>
<dbReference type="GO" id="GO:0004115">
    <property type="term" value="F:3',5'-cyclic-AMP phosphodiesterase activity"/>
    <property type="evidence" value="ECO:0007669"/>
    <property type="project" value="UniProtKB-EC"/>
</dbReference>
<dbReference type="GO" id="GO:0006198">
    <property type="term" value="P:cAMP catabolic process"/>
    <property type="evidence" value="ECO:0007669"/>
    <property type="project" value="UniProtKB-UniPathway"/>
</dbReference>
<dbReference type="InterPro" id="IPR040844">
    <property type="entry name" value="PDE4_UCR"/>
</dbReference>
<dbReference type="Pfam" id="PF18100">
    <property type="entry name" value="PDE4_UCR"/>
    <property type="match status" value="1"/>
</dbReference>
<dbReference type="PROSITE" id="PS00014">
    <property type="entry name" value="ER_TARGET"/>
    <property type="match status" value="1"/>
</dbReference>
<sequence>PWLVGWWDQFKRMLNRELTHLSEMSRSGNQVSEYISTTFLDKQNEVEIPSPTMKDREPQEAPRQRPCQQLPPPVPHLQPMSQITGVKRLSHNSGLNNASIPRFGVKTDQEELLAQEL</sequence>
<proteinExistence type="evidence at transcript level"/>
<keyword id="KW-0114">cAMP</keyword>
<keyword id="KW-0963">Cytoplasm</keyword>
<keyword id="KW-0378">Hydrolase</keyword>
<keyword id="KW-0472">Membrane</keyword>
<keyword id="KW-0597">Phosphoprotein</keyword>
<keyword id="KW-1185">Reference proteome</keyword>
<keyword id="KW-0862">Zinc</keyword>
<feature type="chain" id="PRO_0000198805" description="3',5'-cyclic-AMP phosphodiesterase 4A">
    <location>
        <begin position="1" status="less than"/>
        <end position="117" status="greater than"/>
    </location>
</feature>
<feature type="region of interest" description="Disordered" evidence="4">
    <location>
        <begin position="42"/>
        <end position="79"/>
    </location>
</feature>
<feature type="region of interest" description="Catalytic" evidence="1">
    <location>
        <begin position="78"/>
        <end position="117" status="greater than"/>
    </location>
</feature>
<feature type="compositionally biased region" description="Basic and acidic residues" evidence="4">
    <location>
        <begin position="53"/>
        <end position="63"/>
    </location>
</feature>
<feature type="non-terminal residue">
    <location>
        <position position="1"/>
    </location>
</feature>
<feature type="non-terminal residue">
    <location>
        <position position="117"/>
    </location>
</feature>
<comment type="function">
    <text evidence="2">Hydrolyzes the second messenger 3',5'-cyclic AMP (cAMP), which is a key regulator of many important physiological processes.</text>
</comment>
<comment type="catalytic activity">
    <reaction evidence="2">
        <text>3',5'-cyclic AMP + H2O = AMP + H(+)</text>
        <dbReference type="Rhea" id="RHEA:25277"/>
        <dbReference type="ChEBI" id="CHEBI:15377"/>
        <dbReference type="ChEBI" id="CHEBI:15378"/>
        <dbReference type="ChEBI" id="CHEBI:58165"/>
        <dbReference type="ChEBI" id="CHEBI:456215"/>
        <dbReference type="EC" id="3.1.4.53"/>
    </reaction>
    <physiologicalReaction direction="left-to-right" evidence="2">
        <dbReference type="Rhea" id="RHEA:25278"/>
    </physiologicalReaction>
</comment>
<comment type="cofactor">
    <cofactor evidence="2">
        <name>Zn(2+)</name>
        <dbReference type="ChEBI" id="CHEBI:29105"/>
    </cofactor>
    <text evidence="2">Binds 2 divalent metal cations per subunit. Site 1 may preferentially bind zinc ions.</text>
</comment>
<comment type="cofactor">
    <cofactor evidence="2">
        <name>Mg(2+)</name>
        <dbReference type="ChEBI" id="CHEBI:18420"/>
    </cofactor>
    <cofactor evidence="3">
        <name>Mn(2+)</name>
        <dbReference type="ChEBI" id="CHEBI:29035"/>
    </cofactor>
    <text evidence="2 3">Binds 2 divalent metal cations per subunit (By similarity). Site 2 has a preference for magnesium and/or manganese ions (By similarity).</text>
</comment>
<comment type="pathway">
    <text evidence="2">Purine metabolism; 3',5'-cyclic AMP degradation; AMP from 3',5'-cyclic AMP: step 1/1.</text>
</comment>
<comment type="subunit">
    <text evidence="2">Interacts with LYN (via SH3 domain). Interacts with ARRB2.</text>
</comment>
<comment type="subcellular location">
    <subcellularLocation>
        <location evidence="2">Cytoplasm</location>
        <location evidence="2">Cytosol</location>
    </subcellularLocation>
    <subcellularLocation>
        <location>Membrane</location>
        <topology evidence="2">Peripheral membrane protein</topology>
    </subcellularLocation>
</comment>
<comment type="PTM">
    <text evidence="2">Proteolytically cleaved by CASP3.</text>
</comment>
<comment type="similarity">
    <text evidence="5">Belongs to the cyclic nucleotide phosphodiesterase family. PDE4 subfamily.</text>
</comment>
<gene>
    <name type="primary">PDE4A</name>
</gene>
<organism>
    <name type="scientific">Cavia porcellus</name>
    <name type="common">Guinea pig</name>
    <dbReference type="NCBI Taxonomy" id="10141"/>
    <lineage>
        <taxon>Eukaryota</taxon>
        <taxon>Metazoa</taxon>
        <taxon>Chordata</taxon>
        <taxon>Craniata</taxon>
        <taxon>Vertebrata</taxon>
        <taxon>Euteleostomi</taxon>
        <taxon>Mammalia</taxon>
        <taxon>Eutheria</taxon>
        <taxon>Euarchontoglires</taxon>
        <taxon>Glires</taxon>
        <taxon>Rodentia</taxon>
        <taxon>Hystricomorpha</taxon>
        <taxon>Caviidae</taxon>
        <taxon>Cavia</taxon>
    </lineage>
</organism>
<protein>
    <recommendedName>
        <fullName evidence="5">3',5'-cyclic-AMP phosphodiesterase 4A</fullName>
        <ecNumber evidence="2">3.1.4.53</ecNumber>
    </recommendedName>
    <alternativeName>
        <fullName evidence="5">cAMP-specific phosphodiesterase 4A</fullName>
    </alternativeName>
</protein>
<accession>O89085</accession>
<evidence type="ECO:0000250" key="1"/>
<evidence type="ECO:0000250" key="2">
    <source>
        <dbReference type="UniProtKB" id="P27815"/>
    </source>
</evidence>
<evidence type="ECO:0000250" key="3">
    <source>
        <dbReference type="UniProtKB" id="Q07343"/>
    </source>
</evidence>
<evidence type="ECO:0000256" key="4">
    <source>
        <dbReference type="SAM" id="MobiDB-lite"/>
    </source>
</evidence>
<evidence type="ECO:0000305" key="5"/>